<evidence type="ECO:0000250" key="1"/>
<evidence type="ECO:0000250" key="2">
    <source>
        <dbReference type="UniProtKB" id="P02563"/>
    </source>
</evidence>
<evidence type="ECO:0000250" key="3">
    <source>
        <dbReference type="UniProtKB" id="P02564"/>
    </source>
</evidence>
<evidence type="ECO:0000250" key="4">
    <source>
        <dbReference type="UniProtKB" id="P12883"/>
    </source>
</evidence>
<evidence type="ECO:0000250" key="5">
    <source>
        <dbReference type="UniProtKB" id="Q02566"/>
    </source>
</evidence>
<evidence type="ECO:0000255" key="6"/>
<evidence type="ECO:0000255" key="7">
    <source>
        <dbReference type="PROSITE-ProRule" id="PRU00116"/>
    </source>
</evidence>
<evidence type="ECO:0000255" key="8">
    <source>
        <dbReference type="PROSITE-ProRule" id="PRU00782"/>
    </source>
</evidence>
<evidence type="ECO:0000255" key="9">
    <source>
        <dbReference type="PROSITE-ProRule" id="PRU01190"/>
    </source>
</evidence>
<evidence type="ECO:0000256" key="10">
    <source>
        <dbReference type="SAM" id="MobiDB-lite"/>
    </source>
</evidence>
<evidence type="ECO:0000305" key="11"/>
<evidence type="ECO:0007829" key="12">
    <source>
        <dbReference type="PDB" id="5N69"/>
    </source>
</evidence>
<evidence type="ECO:0007829" key="13">
    <source>
        <dbReference type="PDB" id="5N6A"/>
    </source>
</evidence>
<evidence type="ECO:0007829" key="14">
    <source>
        <dbReference type="PDB" id="6FSA"/>
    </source>
</evidence>
<evidence type="ECO:0007829" key="15">
    <source>
        <dbReference type="PDB" id="9F6C"/>
    </source>
</evidence>
<organism>
    <name type="scientific">Bos taurus</name>
    <name type="common">Bovine</name>
    <dbReference type="NCBI Taxonomy" id="9913"/>
    <lineage>
        <taxon>Eukaryota</taxon>
        <taxon>Metazoa</taxon>
        <taxon>Chordata</taxon>
        <taxon>Craniata</taxon>
        <taxon>Vertebrata</taxon>
        <taxon>Euteleostomi</taxon>
        <taxon>Mammalia</taxon>
        <taxon>Eutheria</taxon>
        <taxon>Laurasiatheria</taxon>
        <taxon>Artiodactyla</taxon>
        <taxon>Ruminantia</taxon>
        <taxon>Pecora</taxon>
        <taxon>Bovidae</taxon>
        <taxon>Bovinae</taxon>
        <taxon>Bos</taxon>
    </lineage>
</organism>
<reference key="1">
    <citation type="journal article" date="2004" name="Meat Sci.">
        <title>Myosin heavy chain isoforms expressed in bovine skeletal muscles.</title>
        <authorList>
            <person name="Chikuni K."/>
            <person name="Muroya S."/>
            <person name="Nakajima I."/>
        </authorList>
        <dbReference type="AGRICOLA" id="IND43619651"/>
    </citation>
    <scope>NUCLEOTIDE SEQUENCE [MRNA]</scope>
    <source>
        <strain>Holstein</strain>
        <tissue>Skeletal muscle</tissue>
    </source>
</reference>
<reference key="2">
    <citation type="journal article" date="1972" name="J. Biol. Chem.">
        <title>Homologous methylated and nonmethylated histidine peptides in skeletal and cardiac myosins.</title>
        <authorList>
            <person name="Huszar G."/>
            <person name="Elzinga M."/>
        </authorList>
    </citation>
    <scope>PROTEIN SEQUENCE OF 745-757</scope>
    <scope>LACK OF METHYLATION AT HIS-753</scope>
    <source>
        <tissue>Heart</tissue>
    </source>
</reference>
<feature type="chain" id="PRO_0000274175" description="Myosin-7">
    <location>
        <begin position="1"/>
        <end position="1935"/>
    </location>
</feature>
<feature type="domain" description="Myosin N-terminal SH3-like" evidence="9">
    <location>
        <begin position="32"/>
        <end position="81"/>
    </location>
</feature>
<feature type="domain" description="Myosin motor" evidence="8">
    <location>
        <begin position="85"/>
        <end position="778"/>
    </location>
</feature>
<feature type="domain" description="IQ" evidence="7">
    <location>
        <begin position="781"/>
        <end position="810"/>
    </location>
</feature>
<feature type="region of interest" description="Actin-binding" evidence="1">
    <location>
        <begin position="655"/>
        <end position="677"/>
    </location>
</feature>
<feature type="region of interest" description="Actin-binding" evidence="1">
    <location>
        <begin position="757"/>
        <end position="771"/>
    </location>
</feature>
<feature type="region of interest" description="Disordered" evidence="10">
    <location>
        <begin position="1907"/>
        <end position="1935"/>
    </location>
</feature>
<feature type="coiled-coil region" evidence="6">
    <location>
        <begin position="839"/>
        <end position="1935"/>
    </location>
</feature>
<feature type="compositionally biased region" description="Basic and acidic residues" evidence="10">
    <location>
        <begin position="1923"/>
        <end position="1935"/>
    </location>
</feature>
<feature type="binding site" evidence="1">
    <location>
        <begin position="178"/>
        <end position="185"/>
    </location>
    <ligand>
        <name>ATP</name>
        <dbReference type="ChEBI" id="CHEBI:30616"/>
    </ligand>
</feature>
<feature type="modified residue" description="N6,N6,N6-trimethyllysine" evidence="6">
    <location>
        <position position="129"/>
    </location>
</feature>
<feature type="modified residue" description="Phosphothreonine" evidence="2">
    <location>
        <position position="378"/>
    </location>
</feature>
<feature type="modified residue" description="Phosphoserine" evidence="2">
    <location>
        <position position="1137"/>
    </location>
</feature>
<feature type="modified residue" description="Phosphoserine" evidence="5">
    <location>
        <position position="1269"/>
    </location>
</feature>
<feature type="modified residue" description="Phosphothreonine" evidence="2">
    <location>
        <position position="1282"/>
    </location>
</feature>
<feature type="modified residue" description="Phosphotyrosine" evidence="2">
    <location>
        <position position="1308"/>
    </location>
</feature>
<feature type="modified residue" description="Phosphothreonine" evidence="2">
    <location>
        <position position="1309"/>
    </location>
</feature>
<feature type="modified residue" description="Phosphoserine" evidence="3">
    <location>
        <position position="1510"/>
    </location>
</feature>
<feature type="modified residue" description="Phosphothreonine" evidence="2">
    <location>
        <position position="1513"/>
    </location>
</feature>
<feature type="sequence conflict" description="In Ref. 2; AA sequence." evidence="11" ref="2">
    <original>NQ</original>
    <variation>QN</variation>
    <location>
        <begin position="754"/>
        <end position="755"/>
    </location>
</feature>
<feature type="helix" evidence="14">
    <location>
        <begin position="4"/>
        <end position="15"/>
    </location>
</feature>
<feature type="helix" evidence="14">
    <location>
        <begin position="20"/>
        <end position="27"/>
    </location>
</feature>
<feature type="turn" evidence="14">
    <location>
        <begin position="33"/>
        <end position="35"/>
    </location>
</feature>
<feature type="strand" evidence="14">
    <location>
        <begin position="36"/>
        <end position="41"/>
    </location>
</feature>
<feature type="turn" evidence="14">
    <location>
        <begin position="42"/>
        <end position="44"/>
    </location>
</feature>
<feature type="strand" evidence="14">
    <location>
        <begin position="45"/>
        <end position="53"/>
    </location>
</feature>
<feature type="strand" evidence="14">
    <location>
        <begin position="56"/>
        <end position="63"/>
    </location>
</feature>
<feature type="helix" evidence="14">
    <location>
        <begin position="64"/>
        <end position="66"/>
    </location>
</feature>
<feature type="strand" evidence="14">
    <location>
        <begin position="68"/>
        <end position="72"/>
    </location>
</feature>
<feature type="helix" evidence="14">
    <location>
        <begin position="73"/>
        <end position="75"/>
    </location>
</feature>
<feature type="helix" evidence="14">
    <location>
        <begin position="82"/>
        <end position="84"/>
    </location>
</feature>
<feature type="helix" evidence="14">
    <location>
        <begin position="90"/>
        <end position="92"/>
    </location>
</feature>
<feature type="helix" evidence="14">
    <location>
        <begin position="98"/>
        <end position="110"/>
    </location>
</feature>
<feature type="strand" evidence="14">
    <location>
        <begin position="115"/>
        <end position="118"/>
    </location>
</feature>
<feature type="strand" evidence="14">
    <location>
        <begin position="121"/>
        <end position="125"/>
    </location>
</feature>
<feature type="helix" evidence="14">
    <location>
        <begin position="136"/>
        <end position="142"/>
    </location>
</feature>
<feature type="helix" evidence="14">
    <location>
        <begin position="147"/>
        <end position="149"/>
    </location>
</feature>
<feature type="helix" evidence="14">
    <location>
        <begin position="154"/>
        <end position="168"/>
    </location>
</feature>
<feature type="strand" evidence="14">
    <location>
        <begin position="171"/>
        <end position="178"/>
    </location>
</feature>
<feature type="helix" evidence="14">
    <location>
        <begin position="184"/>
        <end position="198"/>
    </location>
</feature>
<feature type="helix" evidence="14">
    <location>
        <begin position="216"/>
        <end position="231"/>
    </location>
</feature>
<feature type="strand" evidence="14">
    <location>
        <begin position="244"/>
        <end position="252"/>
    </location>
</feature>
<feature type="helix" evidence="14">
    <location>
        <begin position="254"/>
        <end position="256"/>
    </location>
</feature>
<feature type="strand" evidence="14">
    <location>
        <begin position="257"/>
        <end position="266"/>
    </location>
</feature>
<feature type="helix" evidence="14">
    <location>
        <begin position="270"/>
        <end position="273"/>
    </location>
</feature>
<feature type="helix" evidence="14">
    <location>
        <begin position="285"/>
        <end position="290"/>
    </location>
</feature>
<feature type="helix" evidence="14">
    <location>
        <begin position="296"/>
        <end position="301"/>
    </location>
</feature>
<feature type="helix" evidence="14">
    <location>
        <begin position="307"/>
        <end position="309"/>
    </location>
</feature>
<feature type="turn" evidence="14">
    <location>
        <begin position="311"/>
        <end position="313"/>
    </location>
</feature>
<feature type="helix" evidence="14">
    <location>
        <begin position="325"/>
        <end position="338"/>
    </location>
</feature>
<feature type="helix" evidence="14">
    <location>
        <begin position="343"/>
        <end position="359"/>
    </location>
</feature>
<feature type="strand" evidence="14">
    <location>
        <begin position="364"/>
        <end position="366"/>
    </location>
</feature>
<feature type="strand" evidence="12">
    <location>
        <begin position="368"/>
        <end position="371"/>
    </location>
</feature>
<feature type="strand" evidence="14">
    <location>
        <begin position="373"/>
        <end position="376"/>
    </location>
</feature>
<feature type="helix" evidence="14">
    <location>
        <begin position="379"/>
        <end position="388"/>
    </location>
</feature>
<feature type="helix" evidence="14">
    <location>
        <begin position="392"/>
        <end position="400"/>
    </location>
</feature>
<feature type="strand" evidence="15">
    <location>
        <begin position="403"/>
        <end position="406"/>
    </location>
</feature>
<feature type="strand" evidence="15">
    <location>
        <begin position="409"/>
        <end position="412"/>
    </location>
</feature>
<feature type="helix" evidence="14">
    <location>
        <begin position="417"/>
        <end position="446"/>
    </location>
</feature>
<feature type="strand" evidence="14">
    <location>
        <begin position="455"/>
        <end position="461"/>
    </location>
</feature>
<feature type="strand" evidence="14">
    <location>
        <begin position="469"/>
        <end position="471"/>
    </location>
</feature>
<feature type="helix" evidence="14">
    <location>
        <begin position="473"/>
        <end position="504"/>
    </location>
</feature>
<feature type="helix" evidence="14">
    <location>
        <begin position="515"/>
        <end position="525"/>
    </location>
</feature>
<feature type="helix" evidence="14">
    <location>
        <begin position="530"/>
        <end position="538"/>
    </location>
</feature>
<feature type="helix" evidence="14">
    <location>
        <begin position="545"/>
        <end position="556"/>
    </location>
</feature>
<feature type="turn" evidence="14">
    <location>
        <begin position="557"/>
        <end position="559"/>
    </location>
</feature>
<feature type="strand" evidence="14">
    <location>
        <begin position="576"/>
        <end position="581"/>
    </location>
</feature>
<feature type="strand" evidence="14">
    <location>
        <begin position="584"/>
        <end position="588"/>
    </location>
</feature>
<feature type="helix" evidence="14">
    <location>
        <begin position="593"/>
        <end position="598"/>
    </location>
</feature>
<feature type="helix" evidence="14">
    <location>
        <begin position="603"/>
        <end position="610"/>
    </location>
</feature>
<feature type="helix" evidence="14">
    <location>
        <begin position="615"/>
        <end position="621"/>
    </location>
</feature>
<feature type="helix" evidence="14">
    <location>
        <begin position="647"/>
        <end position="662"/>
    </location>
</feature>
<feature type="strand" evidence="14">
    <location>
        <begin position="665"/>
        <end position="673"/>
    </location>
</feature>
<feature type="helix" evidence="14">
    <location>
        <begin position="686"/>
        <end position="695"/>
    </location>
</feature>
<feature type="helix" evidence="14">
    <location>
        <begin position="698"/>
        <end position="705"/>
    </location>
</feature>
<feature type="strand" evidence="13">
    <location>
        <begin position="706"/>
        <end position="708"/>
    </location>
</feature>
<feature type="strand" evidence="14">
    <location>
        <begin position="711"/>
        <end position="714"/>
    </location>
</feature>
<feature type="helix" evidence="14">
    <location>
        <begin position="715"/>
        <end position="722"/>
    </location>
</feature>
<feature type="helix" evidence="14">
    <location>
        <begin position="723"/>
        <end position="725"/>
    </location>
</feature>
<feature type="turn" evidence="14">
    <location>
        <begin position="727"/>
        <end position="729"/>
    </location>
</feature>
<feature type="helix" evidence="14">
    <location>
        <begin position="738"/>
        <end position="748"/>
    </location>
</feature>
<feature type="strand" evidence="14">
    <location>
        <begin position="749"/>
        <end position="751"/>
    </location>
</feature>
<feature type="strand" evidence="14">
    <location>
        <begin position="755"/>
        <end position="758"/>
    </location>
</feature>
<feature type="strand" evidence="14">
    <location>
        <begin position="760"/>
        <end position="765"/>
    </location>
</feature>
<feature type="helix" evidence="14">
    <location>
        <begin position="769"/>
        <end position="799"/>
    </location>
</feature>
<feature type="helix" evidence="14">
    <location>
        <begin position="802"/>
        <end position="805"/>
    </location>
</feature>
<gene>
    <name type="primary">MYH7</name>
</gene>
<dbReference type="EMBL" id="AB059400">
    <property type="protein sequence ID" value="BAB40922.1"/>
    <property type="molecule type" value="mRNA"/>
</dbReference>
<dbReference type="RefSeq" id="NP_777152.1">
    <property type="nucleotide sequence ID" value="NM_174727.1"/>
</dbReference>
<dbReference type="PDB" id="5N69">
    <property type="method" value="X-ray"/>
    <property type="resolution" value="2.45 A"/>
    <property type="chains" value="A/B=1-828"/>
</dbReference>
<dbReference type="PDB" id="5N6A">
    <property type="method" value="X-ray"/>
    <property type="resolution" value="3.10 A"/>
    <property type="chains" value="A=1-828"/>
</dbReference>
<dbReference type="PDB" id="6FSA">
    <property type="method" value="X-ray"/>
    <property type="resolution" value="2.33 A"/>
    <property type="chains" value="A/B=1-1935"/>
</dbReference>
<dbReference type="PDB" id="6X5Z">
    <property type="method" value="EM"/>
    <property type="resolution" value="4.24 A"/>
    <property type="chains" value="D/G/J=1-850"/>
</dbReference>
<dbReference type="PDB" id="8QYP">
    <property type="method" value="X-ray"/>
    <property type="resolution" value="2.76 A"/>
    <property type="chains" value="A=1-780"/>
</dbReference>
<dbReference type="PDB" id="8QYQ">
    <property type="method" value="X-ray"/>
    <property type="resolution" value="2.61 A"/>
    <property type="chains" value="A/B=1-807"/>
</dbReference>
<dbReference type="PDB" id="8QYR">
    <property type="method" value="X-ray"/>
    <property type="resolution" value="1.80 A"/>
    <property type="chains" value="B=1-781"/>
</dbReference>
<dbReference type="PDB" id="8QYU">
    <property type="method" value="X-ray"/>
    <property type="resolution" value="1.96 A"/>
    <property type="chains" value="A/B=1-810"/>
</dbReference>
<dbReference type="PDB" id="9F6C">
    <property type="method" value="X-ray"/>
    <property type="resolution" value="2.33 A"/>
    <property type="chains" value="A/B=1-782"/>
</dbReference>
<dbReference type="PDBsum" id="5N69"/>
<dbReference type="PDBsum" id="5N6A"/>
<dbReference type="PDBsum" id="6FSA"/>
<dbReference type="PDBsum" id="6X5Z"/>
<dbReference type="PDBsum" id="8QYP"/>
<dbReference type="PDBsum" id="8QYQ"/>
<dbReference type="PDBsum" id="8QYR"/>
<dbReference type="PDBsum" id="8QYU"/>
<dbReference type="PDBsum" id="9F6C"/>
<dbReference type="EMDB" id="EMD-22067"/>
<dbReference type="SASBDB" id="Q9BE39"/>
<dbReference type="SMR" id="Q9BE39"/>
<dbReference type="FunCoup" id="Q9BE39">
    <property type="interactions" value="151"/>
</dbReference>
<dbReference type="STRING" id="9913.ENSBTAP00000053217"/>
<dbReference type="PaxDb" id="9913-ENSBTAP00000053217"/>
<dbReference type="ABCD" id="Q9BE39">
    <property type="antibodies" value="1 sequenced antibody"/>
</dbReference>
<dbReference type="GeneID" id="282714"/>
<dbReference type="KEGG" id="bta:282714"/>
<dbReference type="CTD" id="4625"/>
<dbReference type="eggNOG" id="KOG0161">
    <property type="taxonomic scope" value="Eukaryota"/>
</dbReference>
<dbReference type="InParanoid" id="Q9BE39"/>
<dbReference type="OrthoDB" id="312459at2759"/>
<dbReference type="Proteomes" id="UP000009136">
    <property type="component" value="Unplaced"/>
</dbReference>
<dbReference type="GO" id="GO:0005737">
    <property type="term" value="C:cytoplasm"/>
    <property type="evidence" value="ECO:0000318"/>
    <property type="project" value="GO_Central"/>
</dbReference>
<dbReference type="GO" id="GO:0030016">
    <property type="term" value="C:myofibril"/>
    <property type="evidence" value="ECO:0000250"/>
    <property type="project" value="UniProtKB"/>
</dbReference>
<dbReference type="GO" id="GO:0032982">
    <property type="term" value="C:myosin filament"/>
    <property type="evidence" value="ECO:0000250"/>
    <property type="project" value="UniProtKB"/>
</dbReference>
<dbReference type="GO" id="GO:0016460">
    <property type="term" value="C:myosin II complex"/>
    <property type="evidence" value="ECO:0000318"/>
    <property type="project" value="GO_Central"/>
</dbReference>
<dbReference type="GO" id="GO:0030017">
    <property type="term" value="C:sarcomere"/>
    <property type="evidence" value="ECO:0000250"/>
    <property type="project" value="UniProtKB"/>
</dbReference>
<dbReference type="GO" id="GO:0051015">
    <property type="term" value="F:actin filament binding"/>
    <property type="evidence" value="ECO:0000318"/>
    <property type="project" value="GO_Central"/>
</dbReference>
<dbReference type="GO" id="GO:0005524">
    <property type="term" value="F:ATP binding"/>
    <property type="evidence" value="ECO:0007669"/>
    <property type="project" value="UniProtKB-KW"/>
</dbReference>
<dbReference type="GO" id="GO:0005516">
    <property type="term" value="F:calmodulin binding"/>
    <property type="evidence" value="ECO:0007669"/>
    <property type="project" value="UniProtKB-KW"/>
</dbReference>
<dbReference type="GO" id="GO:0000146">
    <property type="term" value="F:microfilament motor activity"/>
    <property type="evidence" value="ECO:0000318"/>
    <property type="project" value="GO_Central"/>
</dbReference>
<dbReference type="GO" id="GO:0007512">
    <property type="term" value="P:adult heart development"/>
    <property type="evidence" value="ECO:0000318"/>
    <property type="project" value="GO_Central"/>
</dbReference>
<dbReference type="GO" id="GO:0060048">
    <property type="term" value="P:cardiac muscle contraction"/>
    <property type="evidence" value="ECO:0000318"/>
    <property type="project" value="GO_Central"/>
</dbReference>
<dbReference type="GO" id="GO:0030049">
    <property type="term" value="P:muscle filament sliding"/>
    <property type="evidence" value="ECO:0000318"/>
    <property type="project" value="GO_Central"/>
</dbReference>
<dbReference type="CDD" id="cd14917">
    <property type="entry name" value="MYSc_Myh7"/>
    <property type="match status" value="1"/>
</dbReference>
<dbReference type="DisProt" id="DP02522"/>
<dbReference type="FunFam" id="1.10.10.820:FF:000001">
    <property type="entry name" value="Myosin heavy chain"/>
    <property type="match status" value="1"/>
</dbReference>
<dbReference type="FunFam" id="1.20.5.340:FF:000002">
    <property type="entry name" value="Myosin heavy chain"/>
    <property type="match status" value="1"/>
</dbReference>
<dbReference type="FunFam" id="1.20.5.340:FF:000003">
    <property type="entry name" value="Myosin heavy chain"/>
    <property type="match status" value="1"/>
</dbReference>
<dbReference type="FunFam" id="1.20.5.340:FF:000004">
    <property type="entry name" value="Myosin heavy chain"/>
    <property type="match status" value="1"/>
</dbReference>
<dbReference type="FunFam" id="1.20.5.340:FF:000006">
    <property type="entry name" value="Myosin heavy chain"/>
    <property type="match status" value="1"/>
</dbReference>
<dbReference type="FunFam" id="1.20.5.340:FF:000013">
    <property type="entry name" value="Myosin heavy chain"/>
    <property type="match status" value="1"/>
</dbReference>
<dbReference type="FunFam" id="1.20.5.370:FF:000001">
    <property type="entry name" value="Myosin heavy chain"/>
    <property type="match status" value="1"/>
</dbReference>
<dbReference type="FunFam" id="1.20.5.370:FF:000002">
    <property type="entry name" value="Myosin heavy chain"/>
    <property type="match status" value="1"/>
</dbReference>
<dbReference type="FunFam" id="1.20.5.370:FF:000003">
    <property type="entry name" value="Myosin heavy chain"/>
    <property type="match status" value="1"/>
</dbReference>
<dbReference type="FunFam" id="1.20.5.370:FF:000007">
    <property type="entry name" value="Myosin heavy chain"/>
    <property type="match status" value="1"/>
</dbReference>
<dbReference type="FunFam" id="1.20.5.370:FF:000008">
    <property type="entry name" value="Myosin heavy chain"/>
    <property type="match status" value="1"/>
</dbReference>
<dbReference type="FunFam" id="1.20.5.4820:FF:000001">
    <property type="entry name" value="Myosin heavy chain"/>
    <property type="match status" value="1"/>
</dbReference>
<dbReference type="FunFam" id="1.20.58.530:FF:000001">
    <property type="entry name" value="Myosin heavy chain"/>
    <property type="match status" value="1"/>
</dbReference>
<dbReference type="FunFam" id="2.30.30.360:FF:000001">
    <property type="entry name" value="Myosin heavy chain"/>
    <property type="match status" value="1"/>
</dbReference>
<dbReference type="FunFam" id="3.40.850.10:FF:000024">
    <property type="entry name" value="Myosin heavy chain, isoform J"/>
    <property type="match status" value="1"/>
</dbReference>
<dbReference type="FunFam" id="1.20.120.720:FF:000001">
    <property type="entry name" value="Myosin heavy chain, muscle"/>
    <property type="match status" value="1"/>
</dbReference>
<dbReference type="Gene3D" id="1.10.10.820">
    <property type="match status" value="1"/>
</dbReference>
<dbReference type="Gene3D" id="1.20.5.340">
    <property type="match status" value="5"/>
</dbReference>
<dbReference type="Gene3D" id="1.20.5.370">
    <property type="match status" value="5"/>
</dbReference>
<dbReference type="Gene3D" id="1.20.5.4820">
    <property type="match status" value="1"/>
</dbReference>
<dbReference type="Gene3D" id="1.20.58.530">
    <property type="match status" value="1"/>
</dbReference>
<dbReference type="Gene3D" id="6.10.250.2420">
    <property type="match status" value="1"/>
</dbReference>
<dbReference type="Gene3D" id="3.40.850.10">
    <property type="entry name" value="Kinesin motor domain"/>
    <property type="match status" value="1"/>
</dbReference>
<dbReference type="Gene3D" id="2.30.30.360">
    <property type="entry name" value="Myosin S1 fragment, N-terminal"/>
    <property type="match status" value="1"/>
</dbReference>
<dbReference type="Gene3D" id="1.20.120.720">
    <property type="entry name" value="Myosin VI head, motor domain, U50 subdomain"/>
    <property type="match status" value="1"/>
</dbReference>
<dbReference type="InterPro" id="IPR036961">
    <property type="entry name" value="Kinesin_motor_dom_sf"/>
</dbReference>
<dbReference type="InterPro" id="IPR001609">
    <property type="entry name" value="Myosin_head_motor_dom-like"/>
</dbReference>
<dbReference type="InterPro" id="IPR004009">
    <property type="entry name" value="Myosin_N"/>
</dbReference>
<dbReference type="InterPro" id="IPR008989">
    <property type="entry name" value="Myosin_S1_N"/>
</dbReference>
<dbReference type="InterPro" id="IPR002928">
    <property type="entry name" value="Myosin_tail"/>
</dbReference>
<dbReference type="InterPro" id="IPR027417">
    <property type="entry name" value="P-loop_NTPase"/>
</dbReference>
<dbReference type="InterPro" id="IPR014751">
    <property type="entry name" value="XRCC4-like_C"/>
</dbReference>
<dbReference type="PANTHER" id="PTHR45615">
    <property type="entry name" value="MYOSIN HEAVY CHAIN, NON-MUSCLE"/>
    <property type="match status" value="1"/>
</dbReference>
<dbReference type="PANTHER" id="PTHR45615:SF1">
    <property type="entry name" value="MYOSIN-7"/>
    <property type="match status" value="1"/>
</dbReference>
<dbReference type="Pfam" id="PF00063">
    <property type="entry name" value="Myosin_head"/>
    <property type="match status" value="1"/>
</dbReference>
<dbReference type="Pfam" id="PF02736">
    <property type="entry name" value="Myosin_N"/>
    <property type="match status" value="1"/>
</dbReference>
<dbReference type="Pfam" id="PF01576">
    <property type="entry name" value="Myosin_tail_1"/>
    <property type="match status" value="1"/>
</dbReference>
<dbReference type="PRINTS" id="PR00193">
    <property type="entry name" value="MYOSINHEAVY"/>
</dbReference>
<dbReference type="SMART" id="SM00242">
    <property type="entry name" value="MYSc"/>
    <property type="match status" value="1"/>
</dbReference>
<dbReference type="SUPFAM" id="SSF90257">
    <property type="entry name" value="Myosin rod fragments"/>
    <property type="match status" value="5"/>
</dbReference>
<dbReference type="SUPFAM" id="SSF52540">
    <property type="entry name" value="P-loop containing nucleoside triphosphate hydrolases"/>
    <property type="match status" value="1"/>
</dbReference>
<dbReference type="PROSITE" id="PS50096">
    <property type="entry name" value="IQ"/>
    <property type="match status" value="1"/>
</dbReference>
<dbReference type="PROSITE" id="PS51456">
    <property type="entry name" value="MYOSIN_MOTOR"/>
    <property type="match status" value="1"/>
</dbReference>
<dbReference type="PROSITE" id="PS51844">
    <property type="entry name" value="SH3_LIKE"/>
    <property type="match status" value="1"/>
</dbReference>
<sequence>MVDAEMAAFGEAAPYLRKSEKERLEAQTRPFDLKKDVFVPDDKEEFVKATILSREGGKVTAETEHGKTVTVKEDQVLQQNPPKFDKIEDMAMLTFLHEPAVLYNLKERYASWMIYTYSGLFCVTINPYKWLPVYNAEVVAAYRGKKRSEAPPHIFSISDNAYQYMLTDRENQSILITGESGAGKTVNTKRVIQYFAVIAAIGDRSKKEQATGKGTLEDQIIQANPALEAFGNAKTVRNDNSSRFGKFIRIHFGATGKLASADIETYLLEKSRVIFQLKAERDYHIFYQILSNKKPELLDMLLITNNPYDYAFISQGETTVASIDDAEELMATDNAFDVLGFTTEEKNSMYKLTGAIMHFGNMKFKLKQREEQAEPDGTEEADKSAYLMGLNSADLLKGLCHPRVKVGNEYVTKGQNVQQVVYAKGALAKAVYERMFNWMVTRINATLETKQPRQYFIGVLDIAGFEIFDFNSFEQLCINFTNEKLQQFFNHHMFVLEQEEYKKEGIEWEFIDFGMDLQACIDLIEKPMGIMSILEEECMFPKATDMTFKAKLFDNHLGKSSNFQKPRNIKGKPEAHFSLIHYAGTVDYNIIGWLQKNKDPLNETVVDLYKKSSLKMLSSLFANYAGFDTPIEKGKGKAKKGSSFQTVSALHRENLNKLMTNLRSTHPHFVRCIIPNETKSPGVIDNPLVMHQLRCNGVLEGIRICRKGFPNRILYGDFRQRYRILNPAAIPEGQFIDSRKGAEKLLGSLDIDHNQYKFGHTKVFFKAGLLGLLEEMRDERLSRIITRIQAQSRGVLSRMEFKKLLERRDSLLIIQWNIRAFMGVKNWPWMKLYFKIKPLLKSAETEKEIALMKEEFGRLKEALEKSEARRKELEEKMVSLLQEKNDLQLQVQAEQDNLADAEERCDQLIKNKIQLEAKVKEMTERLEDEEEMNAELTAKKRKLEDECSELKRDIDDLELTLAKVEKEKHATENKVKNLTEEMAGLDEIIAKLTKEKKALQEAHQQALDDLQAEEDKVNTLTKAKVKLEQHVDDLEGSLEQEKKVRMDLERAKRKLEGDLKLTQESIMDLENDKQQLDERLKKKDFELNALNARIEDEQALGSQLQKKLKELQARIEELEEELEAERTARAKVEKLRSDLSRELEEISERLEEAGGATSVQIEMNKKREAEFQKMRRDLEEATLQHEATAAALRKKHADSVAELSEQIDNLQRVKQKLEKEKSEFKLELDDVTSNMEQIIKAKANLEKMCRTLEDQMNEHRSKAEETQRSVNDLTSQRAKLQTENGELSRQLDEKEALISQLTRGKLTYTQQLEDLKRQLEEEVKAKNALAHALQSARHDCDLLREQYEEETEAKAELQRVLSKANSEVAQWRTKYETDAIQRTEELEEAKKKLAQRLQDAEEAVEAVNAKCSSLEKTKHRLQNEIEDLMVDVERSNAAAAALDKKQRNFDKILAEWKQKYEESQSELESSQKEARSLSTELFKLKNAYEESLEHLETFKRENKNLQEEISDLTEQLGSSGKTIHELEKVRKQLEAEKLELQSALEEAEASLEQEEGKILRAQLEFNQIKAEMERKLAEKDEEMEQAKRNHLRVVDSLQTSLDAETRSRNEALRVKKKMEGDLNEMEIQLSHANRLAAEAQKQVKSLQSLLKDTQIQLDDAVRANDDLKENIAIVERRNNLLQAELEELRAVVEQTERSRKLAEQELIETSERVQLLHSQNTSLINQKKKMEADLSQLQTEVEEAVQECRNAEEKAKKAITDAAMMAEELKKEQDTSAHLERMKKNMEQTIKDLQHRLDEAEQIALKGGKKQLQKLEARVRELENELEAEQKRNAESVKGMRKSERRIKELTYQTEEDRKNLLRLQDLVDKLQLKVKAYKRQAEEAEEQANTNLSKFRKVQHELDEAEERADIAESQVNKLRAKSRDIGTKGLNEE</sequence>
<comment type="function">
    <text evidence="4">Myosins are actin-based motor molecules with ATPase activity essential for muscle contraction. Forms regular bipolar thick filaments that, together with actin thin filaments, constitute the fundamental contractile unit of skeletal and cardiac muscle.</text>
</comment>
<comment type="subunit">
    <text evidence="4">Muscle myosin is a hexameric protein that consists of 2 heavy chain subunits (MHC), 2 alkali light chain subunits (MLC) and 2 regulatory light chain subunits (MLC-2). Interacts with ECPAS. Interacts (via C-terminus) with LRRC39.</text>
</comment>
<comment type="subcellular location">
    <subcellularLocation>
        <location evidence="3">Cytoplasm</location>
        <location evidence="3">Myofibril</location>
    </subcellularLocation>
    <subcellularLocation>
        <location evidence="3">Cytoplasm</location>
        <location evidence="3">Myofibril</location>
        <location evidence="3">Sarcomere</location>
    </subcellularLocation>
    <text evidence="3">Thick filaments of the myofibrils.</text>
</comment>
<comment type="domain">
    <text evidence="11">Limited proteolysis of myosin heavy chain produces 1 light meromyosin (LMM) and 1 heavy meromyosin (HMM). HMM can be further cleaved into 2 globular subfragments (S1) and 1 rod-shaped subfragment (S2).</text>
</comment>
<comment type="domain">
    <text evidence="4">The rodlike tail sequence is highly repetitive, showing cycles of a 28-residue repeat pattern composed of 4 heptapeptides, characteristic for alpha-helical coiled coils. Four skip residues (Skip1: Thr-1188, Skip2: Glu-1385, Skip3: Glu-1582 and Skip4: Gly-1807) introduce discontinuities in the coiled-coil heptad repeats. The first three skip residues are structurally comparable and induce a unique local relaxation of the coiled-coil superhelical pitch and the fourth skip residue lies within a highly flexible molecular hinge that is necessary for myosin incorporation in the bare zone of sarcomeres.</text>
</comment>
<comment type="miscellaneous">
    <text>The cardiac alpha isoform is a 'fast' ATPase myosin, while the beta isoform is a 'slow' ATPase.</text>
</comment>
<comment type="similarity">
    <text evidence="11">Belongs to the TRAFAC class myosin-kinesin ATPase superfamily. Myosin family.</text>
</comment>
<comment type="caution">
    <text evidence="11">Represents a conventional myosin. This protein should not be confused with the unconventional myosin-7 (MYO7).</text>
</comment>
<keyword id="KW-0002">3D-structure</keyword>
<keyword id="KW-0009">Actin-binding</keyword>
<keyword id="KW-0067">ATP-binding</keyword>
<keyword id="KW-0112">Calmodulin-binding</keyword>
<keyword id="KW-0175">Coiled coil</keyword>
<keyword id="KW-0963">Cytoplasm</keyword>
<keyword id="KW-0903">Direct protein sequencing</keyword>
<keyword id="KW-0488">Methylation</keyword>
<keyword id="KW-0505">Motor protein</keyword>
<keyword id="KW-0514">Muscle protein</keyword>
<keyword id="KW-0518">Myosin</keyword>
<keyword id="KW-0547">Nucleotide-binding</keyword>
<keyword id="KW-0597">Phosphoprotein</keyword>
<keyword id="KW-1185">Reference proteome</keyword>
<keyword id="KW-0787">Thick filament</keyword>
<accession>Q9BE39</accession>
<name>MYH7_BOVIN</name>
<protein>
    <recommendedName>
        <fullName>Myosin-7</fullName>
    </recommendedName>
    <alternativeName>
        <fullName>Myosin heavy chain 7</fullName>
    </alternativeName>
    <alternativeName>
        <fullName>Myosin heavy chain slow isoform</fullName>
        <shortName>MyHC-slow</shortName>
    </alternativeName>
    <alternativeName>
        <fullName>Myosin heavy chain, cardiac muscle beta isoform</fullName>
        <shortName>MyHC-beta</shortName>
    </alternativeName>
</protein>
<proteinExistence type="evidence at protein level"/>